<reference key="1">
    <citation type="journal article" date="2013" name="Nature">
        <title>The zebrafish reference genome sequence and its relationship to the human genome.</title>
        <authorList>
            <person name="Howe K."/>
            <person name="Clark M.D."/>
            <person name="Torroja C.F."/>
            <person name="Torrance J."/>
            <person name="Berthelot C."/>
            <person name="Muffato M."/>
            <person name="Collins J.E."/>
            <person name="Humphray S."/>
            <person name="McLaren K."/>
            <person name="Matthews L."/>
            <person name="McLaren S."/>
            <person name="Sealy I."/>
            <person name="Caccamo M."/>
            <person name="Churcher C."/>
            <person name="Scott C."/>
            <person name="Barrett J.C."/>
            <person name="Koch R."/>
            <person name="Rauch G.J."/>
            <person name="White S."/>
            <person name="Chow W."/>
            <person name="Kilian B."/>
            <person name="Quintais L.T."/>
            <person name="Guerra-Assuncao J.A."/>
            <person name="Zhou Y."/>
            <person name="Gu Y."/>
            <person name="Yen J."/>
            <person name="Vogel J.H."/>
            <person name="Eyre T."/>
            <person name="Redmond S."/>
            <person name="Banerjee R."/>
            <person name="Chi J."/>
            <person name="Fu B."/>
            <person name="Langley E."/>
            <person name="Maguire S.F."/>
            <person name="Laird G.K."/>
            <person name="Lloyd D."/>
            <person name="Kenyon E."/>
            <person name="Donaldson S."/>
            <person name="Sehra H."/>
            <person name="Almeida-King J."/>
            <person name="Loveland J."/>
            <person name="Trevanion S."/>
            <person name="Jones M."/>
            <person name="Quail M."/>
            <person name="Willey D."/>
            <person name="Hunt A."/>
            <person name="Burton J."/>
            <person name="Sims S."/>
            <person name="McLay K."/>
            <person name="Plumb B."/>
            <person name="Davis J."/>
            <person name="Clee C."/>
            <person name="Oliver K."/>
            <person name="Clark R."/>
            <person name="Riddle C."/>
            <person name="Elliot D."/>
            <person name="Threadgold G."/>
            <person name="Harden G."/>
            <person name="Ware D."/>
            <person name="Begum S."/>
            <person name="Mortimore B."/>
            <person name="Kerry G."/>
            <person name="Heath P."/>
            <person name="Phillimore B."/>
            <person name="Tracey A."/>
            <person name="Corby N."/>
            <person name="Dunn M."/>
            <person name="Johnson C."/>
            <person name="Wood J."/>
            <person name="Clark S."/>
            <person name="Pelan S."/>
            <person name="Griffiths G."/>
            <person name="Smith M."/>
            <person name="Glithero R."/>
            <person name="Howden P."/>
            <person name="Barker N."/>
            <person name="Lloyd C."/>
            <person name="Stevens C."/>
            <person name="Harley J."/>
            <person name="Holt K."/>
            <person name="Panagiotidis G."/>
            <person name="Lovell J."/>
            <person name="Beasley H."/>
            <person name="Henderson C."/>
            <person name="Gordon D."/>
            <person name="Auger K."/>
            <person name="Wright D."/>
            <person name="Collins J."/>
            <person name="Raisen C."/>
            <person name="Dyer L."/>
            <person name="Leung K."/>
            <person name="Robertson L."/>
            <person name="Ambridge K."/>
            <person name="Leongamornlert D."/>
            <person name="McGuire S."/>
            <person name="Gilderthorp R."/>
            <person name="Griffiths C."/>
            <person name="Manthravadi D."/>
            <person name="Nichol S."/>
            <person name="Barker G."/>
            <person name="Whitehead S."/>
            <person name="Kay M."/>
            <person name="Brown J."/>
            <person name="Murnane C."/>
            <person name="Gray E."/>
            <person name="Humphries M."/>
            <person name="Sycamore N."/>
            <person name="Barker D."/>
            <person name="Saunders D."/>
            <person name="Wallis J."/>
            <person name="Babbage A."/>
            <person name="Hammond S."/>
            <person name="Mashreghi-Mohammadi M."/>
            <person name="Barr L."/>
            <person name="Martin S."/>
            <person name="Wray P."/>
            <person name="Ellington A."/>
            <person name="Matthews N."/>
            <person name="Ellwood M."/>
            <person name="Woodmansey R."/>
            <person name="Clark G."/>
            <person name="Cooper J."/>
            <person name="Tromans A."/>
            <person name="Grafham D."/>
            <person name="Skuce C."/>
            <person name="Pandian R."/>
            <person name="Andrews R."/>
            <person name="Harrison E."/>
            <person name="Kimberley A."/>
            <person name="Garnett J."/>
            <person name="Fosker N."/>
            <person name="Hall R."/>
            <person name="Garner P."/>
            <person name="Kelly D."/>
            <person name="Bird C."/>
            <person name="Palmer S."/>
            <person name="Gehring I."/>
            <person name="Berger A."/>
            <person name="Dooley C.M."/>
            <person name="Ersan-Urun Z."/>
            <person name="Eser C."/>
            <person name="Geiger H."/>
            <person name="Geisler M."/>
            <person name="Karotki L."/>
            <person name="Kirn A."/>
            <person name="Konantz J."/>
            <person name="Konantz M."/>
            <person name="Oberlander M."/>
            <person name="Rudolph-Geiger S."/>
            <person name="Teucke M."/>
            <person name="Lanz C."/>
            <person name="Raddatz G."/>
            <person name="Osoegawa K."/>
            <person name="Zhu B."/>
            <person name="Rapp A."/>
            <person name="Widaa S."/>
            <person name="Langford C."/>
            <person name="Yang F."/>
            <person name="Schuster S.C."/>
            <person name="Carter N.P."/>
            <person name="Harrow J."/>
            <person name="Ning Z."/>
            <person name="Herrero J."/>
            <person name="Searle S.M."/>
            <person name="Enright A."/>
            <person name="Geisler R."/>
            <person name="Plasterk R.H."/>
            <person name="Lee C."/>
            <person name="Westerfield M."/>
            <person name="de Jong P.J."/>
            <person name="Zon L.I."/>
            <person name="Postlethwait J.H."/>
            <person name="Nusslein-Volhard C."/>
            <person name="Hubbard T.J."/>
            <person name="Roest Crollius H."/>
            <person name="Rogers J."/>
            <person name="Stemple D.L."/>
        </authorList>
    </citation>
    <scope>NUCLEOTIDE SEQUENCE [LARGE SCALE GENOMIC DNA]</scope>
    <source>
        <strain>Tuebingen</strain>
    </source>
</reference>
<protein>
    <recommendedName>
        <fullName>Tudor domain-containing protein 7B</fullName>
    </recommendedName>
</protein>
<feature type="chain" id="PRO_0000409519" description="Tudor domain-containing protein 7B">
    <location>
        <begin position="1"/>
        <end position="1085"/>
    </location>
</feature>
<feature type="domain" description="HTH OST-type 1" evidence="3">
    <location>
        <begin position="3"/>
        <end position="76"/>
    </location>
</feature>
<feature type="domain" description="HTH OST-type 2" evidence="3">
    <location>
        <begin position="229"/>
        <end position="299"/>
    </location>
</feature>
<feature type="domain" description="HTH OST-type 3" evidence="3">
    <location>
        <begin position="340"/>
        <end position="410"/>
    </location>
</feature>
<feature type="domain" description="Tudor 1" evidence="2">
    <location>
        <begin position="496"/>
        <end position="554"/>
    </location>
</feature>
<feature type="domain" description="Tudor 2" evidence="2">
    <location>
        <begin position="686"/>
        <end position="743"/>
    </location>
</feature>
<feature type="region of interest" description="Disordered" evidence="4">
    <location>
        <begin position="112"/>
        <end position="183"/>
    </location>
</feature>
<feature type="region of interest" description="Disordered" evidence="4">
    <location>
        <begin position="200"/>
        <end position="228"/>
    </location>
</feature>
<feature type="region of interest" description="Disordered" evidence="4">
    <location>
        <begin position="297"/>
        <end position="341"/>
    </location>
</feature>
<feature type="region of interest" description="Disordered" evidence="4">
    <location>
        <begin position="843"/>
        <end position="888"/>
    </location>
</feature>
<feature type="compositionally biased region" description="Polar residues" evidence="4">
    <location>
        <begin position="203"/>
        <end position="216"/>
    </location>
</feature>
<feature type="compositionally biased region" description="Polar residues" evidence="4">
    <location>
        <begin position="322"/>
        <end position="335"/>
    </location>
</feature>
<feature type="compositionally biased region" description="Polar residues" evidence="4">
    <location>
        <begin position="843"/>
        <end position="853"/>
    </location>
</feature>
<organism>
    <name type="scientific">Danio rerio</name>
    <name type="common">Zebrafish</name>
    <name type="synonym">Brachydanio rerio</name>
    <dbReference type="NCBI Taxonomy" id="7955"/>
    <lineage>
        <taxon>Eukaryota</taxon>
        <taxon>Metazoa</taxon>
        <taxon>Chordata</taxon>
        <taxon>Craniata</taxon>
        <taxon>Vertebrata</taxon>
        <taxon>Euteleostomi</taxon>
        <taxon>Actinopterygii</taxon>
        <taxon>Neopterygii</taxon>
        <taxon>Teleostei</taxon>
        <taxon>Ostariophysi</taxon>
        <taxon>Cypriniformes</taxon>
        <taxon>Danionidae</taxon>
        <taxon>Danioninae</taxon>
        <taxon>Danio</taxon>
    </lineage>
</organism>
<comment type="function">
    <text evidence="1">Component of specific cytoplasmic RNA granules involved in post-transcriptional regulation of specific genes: probably acts by binding to specific mRNAs and regulating their translation. Probably required during spermatogenesis (By similarity).</text>
</comment>
<comment type="subcellular location">
    <subcellularLocation>
        <location>Cytoplasm</location>
    </subcellularLocation>
    <text evidence="1">Localizes to cytoplasmic RNA granules.</text>
</comment>
<accession>E7FDW8</accession>
<keyword id="KW-0963">Cytoplasm</keyword>
<keyword id="KW-0221">Differentiation</keyword>
<keyword id="KW-1185">Reference proteome</keyword>
<keyword id="KW-0677">Repeat</keyword>
<keyword id="KW-0694">RNA-binding</keyword>
<keyword id="KW-0744">Spermatogenesis</keyword>
<gene>
    <name type="primary">tdrd7b</name>
</gene>
<dbReference type="EMBL" id="BX664612">
    <property type="status" value="NOT_ANNOTATED_CDS"/>
    <property type="molecule type" value="Genomic_DNA"/>
</dbReference>
<dbReference type="EMBL" id="CR382383">
    <property type="status" value="NOT_ANNOTATED_CDS"/>
    <property type="molecule type" value="Genomic_DNA"/>
</dbReference>
<dbReference type="RefSeq" id="NP_001340858.1">
    <property type="nucleotide sequence ID" value="NM_001353929.1"/>
</dbReference>
<dbReference type="RefSeq" id="XP_005166552.1">
    <property type="nucleotide sequence ID" value="XM_005166495.3"/>
</dbReference>
<dbReference type="SMR" id="E7FDW8"/>
<dbReference type="FunCoup" id="E7FDW8">
    <property type="interactions" value="1059"/>
</dbReference>
<dbReference type="STRING" id="7955.ENSDARP00000101927"/>
<dbReference type="PaxDb" id="7955-ENSDARP00000101927"/>
<dbReference type="Ensembl" id="ENSDART00000108540">
    <property type="protein sequence ID" value="ENSDARP00000101927"/>
    <property type="gene ID" value="ENSDARG00000077523"/>
</dbReference>
<dbReference type="GeneID" id="100004703"/>
<dbReference type="AGR" id="ZFIN:ZDB-GENE-150109-14"/>
<dbReference type="ZFIN" id="ZDB-GENE-150109-14">
    <property type="gene designation" value="tdrd7b"/>
</dbReference>
<dbReference type="eggNOG" id="KOG2039">
    <property type="taxonomic scope" value="Eukaryota"/>
</dbReference>
<dbReference type="HOGENOM" id="CLU_283554_0_0_1"/>
<dbReference type="InParanoid" id="E7FDW8"/>
<dbReference type="OMA" id="DIPMQRH"/>
<dbReference type="OrthoDB" id="10034606at2759"/>
<dbReference type="PRO" id="PR:E7FDW8"/>
<dbReference type="Proteomes" id="UP000000437">
    <property type="component" value="Chromosome 7"/>
</dbReference>
<dbReference type="Bgee" id="ENSDARG00000077523">
    <property type="expression patterns" value="Expressed in caudal fin and 21 other cell types or tissues"/>
</dbReference>
<dbReference type="GO" id="GO:0043186">
    <property type="term" value="C:P granule"/>
    <property type="evidence" value="ECO:0000318"/>
    <property type="project" value="GO_Central"/>
</dbReference>
<dbReference type="GO" id="GO:0035770">
    <property type="term" value="C:ribonucleoprotein granule"/>
    <property type="evidence" value="ECO:0000250"/>
    <property type="project" value="UniProtKB"/>
</dbReference>
<dbReference type="GO" id="GO:0003729">
    <property type="term" value="F:mRNA binding"/>
    <property type="evidence" value="ECO:0000250"/>
    <property type="project" value="UniProtKB"/>
</dbReference>
<dbReference type="GO" id="GO:0070306">
    <property type="term" value="P:lens fiber cell differentiation"/>
    <property type="evidence" value="ECO:0000250"/>
    <property type="project" value="UniProtKB"/>
</dbReference>
<dbReference type="GO" id="GO:0002089">
    <property type="term" value="P:lens morphogenesis in camera-type eye"/>
    <property type="evidence" value="ECO:0000250"/>
    <property type="project" value="UniProtKB"/>
</dbReference>
<dbReference type="GO" id="GO:0030719">
    <property type="term" value="P:P granule organization"/>
    <property type="evidence" value="ECO:0000318"/>
    <property type="project" value="GO_Central"/>
</dbReference>
<dbReference type="GO" id="GO:0034587">
    <property type="term" value="P:piRNA processing"/>
    <property type="evidence" value="ECO:0000318"/>
    <property type="project" value="GO_Central"/>
</dbReference>
<dbReference type="GO" id="GO:0010608">
    <property type="term" value="P:post-transcriptional regulation of gene expression"/>
    <property type="evidence" value="ECO:0000250"/>
    <property type="project" value="UniProtKB"/>
</dbReference>
<dbReference type="GO" id="GO:0007283">
    <property type="term" value="P:spermatogenesis"/>
    <property type="evidence" value="ECO:0000250"/>
    <property type="project" value="UniProtKB"/>
</dbReference>
<dbReference type="CDD" id="cd09986">
    <property type="entry name" value="LOTUS_1_TDRD7"/>
    <property type="match status" value="1"/>
</dbReference>
<dbReference type="CDD" id="cd09974">
    <property type="entry name" value="LOTUS_3_TDRD7"/>
    <property type="match status" value="1"/>
</dbReference>
<dbReference type="CDD" id="cd20427">
    <property type="entry name" value="Tudor_TDRD7_rpt1"/>
    <property type="match status" value="1"/>
</dbReference>
<dbReference type="CDD" id="cd20428">
    <property type="entry name" value="Tudor_TDRD7_rpt2"/>
    <property type="match status" value="1"/>
</dbReference>
<dbReference type="CDD" id="cd20429">
    <property type="entry name" value="Tudor_TDRD7_rpt3"/>
    <property type="match status" value="1"/>
</dbReference>
<dbReference type="FunFam" id="2.30.30.140:FF:000065">
    <property type="entry name" value="tudor domain-containing protein 7"/>
    <property type="match status" value="1"/>
</dbReference>
<dbReference type="FunFam" id="2.30.30.140:FF:000045">
    <property type="entry name" value="tudor domain-containing protein 7 isoform X1"/>
    <property type="match status" value="1"/>
</dbReference>
<dbReference type="FunFam" id="3.30.420.610:FF:000009">
    <property type="entry name" value="Tudor domain-containing protein 7 isoform X2"/>
    <property type="match status" value="1"/>
</dbReference>
<dbReference type="FunFam" id="3.30.420.610:FF:000006">
    <property type="entry name" value="tudor domain-containing protein 7 isoform X2"/>
    <property type="match status" value="1"/>
</dbReference>
<dbReference type="Gene3D" id="2.30.30.140">
    <property type="match status" value="3"/>
</dbReference>
<dbReference type="Gene3D" id="2.40.50.90">
    <property type="match status" value="3"/>
</dbReference>
<dbReference type="Gene3D" id="3.30.420.610">
    <property type="entry name" value="LOTUS domain-like"/>
    <property type="match status" value="3"/>
</dbReference>
<dbReference type="InterPro" id="IPR041966">
    <property type="entry name" value="LOTUS-like"/>
</dbReference>
<dbReference type="InterPro" id="IPR025605">
    <property type="entry name" value="OST-HTH/LOTUS_dom"/>
</dbReference>
<dbReference type="InterPro" id="IPR035437">
    <property type="entry name" value="SNase_OB-fold_sf"/>
</dbReference>
<dbReference type="InterPro" id="IPR037978">
    <property type="entry name" value="TDRD7_LOTUS_3"/>
</dbReference>
<dbReference type="InterPro" id="IPR002999">
    <property type="entry name" value="Tudor"/>
</dbReference>
<dbReference type="InterPro" id="IPR050621">
    <property type="entry name" value="Tudor_domain_containing"/>
</dbReference>
<dbReference type="InterPro" id="IPR047448">
    <property type="entry name" value="Tudor_TDRD7_rpt2"/>
</dbReference>
<dbReference type="InterPro" id="IPR047449">
    <property type="entry name" value="Tudor_TDRD7_rpt3"/>
</dbReference>
<dbReference type="PANTHER" id="PTHR22948:SF29">
    <property type="entry name" value="FI02030P-RELATED"/>
    <property type="match status" value="1"/>
</dbReference>
<dbReference type="PANTHER" id="PTHR22948">
    <property type="entry name" value="TUDOR DOMAIN CONTAINING PROTEIN"/>
    <property type="match status" value="1"/>
</dbReference>
<dbReference type="Pfam" id="PF12872">
    <property type="entry name" value="OST-HTH"/>
    <property type="match status" value="2"/>
</dbReference>
<dbReference type="Pfam" id="PF00567">
    <property type="entry name" value="TUDOR"/>
    <property type="match status" value="3"/>
</dbReference>
<dbReference type="SMART" id="SM00333">
    <property type="entry name" value="TUDOR"/>
    <property type="match status" value="3"/>
</dbReference>
<dbReference type="SUPFAM" id="SSF63748">
    <property type="entry name" value="Tudor/PWWP/MBT"/>
    <property type="match status" value="3"/>
</dbReference>
<dbReference type="PROSITE" id="PS51644">
    <property type="entry name" value="HTH_OST"/>
    <property type="match status" value="3"/>
</dbReference>
<dbReference type="PROSITE" id="PS50304">
    <property type="entry name" value="TUDOR"/>
    <property type="match status" value="2"/>
</dbReference>
<sequence>MADEELVKKMVRAVLQSSKSGLSLSDLQVEYKDLTGELIPYKQLGYVTLDALLHSMPSIVKLDKGQSGEVMCHATTGNEMAHITKLAARQRTAKKTGRPQVVNCQMRVKPAAPLVLNAKPRTSLRQPDHRGRLGRGGGRGHGDTRTGCMRDPQLDGKGGRPHNTPPNTPSRKPSLPSERPEKRMTLPSRFQKEVHAHILRNPQHINVPSNLNENTTPPKPRLPHSAPYSPKLVQSRLQEVLNKHSNGLWVSKLPQLYREHYKQDLPSEALKELENWTHICTVEKPCSSKPQELLLYPAKETSQITPTPTHDRSPSHHKKPQTQRPSLTAKSNTPESPKALSPDLKQKLGELLLKYSSGLWAHALPKLYQDTYKCKLPEFVLDQLTLLSDICTIDYPVPDNPKRAILYAKVVEDENRNQSGLAGQEMKLERRLSSQTVPPLVIPRVEYPSVLVVDASDTNCVILRYIGEGYSKAQEKLEDEMREFYRQDNTKMALRSPSPGQLTAVGAEEEDDIIRAQVCEVMADKVKVYYVDHGFSEVISIRKLFELNEKFYRLPFQATKCKLAGLESFSQEQAVLKKLESIATGKILLAEILEREDMPLVVLYDTSQDDDVNINAACMKALQDRSLESPLKVNSAYMNVSVTSVCSDGTIYCQVPSRGLTKLNEILEKTENYFHSQVTSESLVSRPFCGKNCLARYKGKWSRVEITNLHGSRVLDILFVDVGVQASVEVIELREIPPPLLRDLISTPAQALKCCLAGLPVSVGLWTPDAVQWLRDTVLHISDCSLKIAKVDETKRLAHVYLFTSKNFHDTSCSLNQQLADSDLWNHQKDVFLSSRGPLKSLNVPTATQTSSLKTDRGDKALHTPKKTSPPLGSKSTPAGSPPERLSLPPALELPEIGQNMDVFVSVACHPGHFVLQPWQDMYKLVVLMGEMILHYNKMEEKALKVEKNQVCAAKVENNWYRVLVKGVLTNGLVSVFQLDYGKHELVSGTKLRPLTQEFCQLPFQAITAQLAGLKPRQWSEEASIVFRNHVEKKPLVAQLESVQEASQPWERKVMIYLVDTSQEERDIWLHDIMAEFTDEMTKTA</sequence>
<name>TRD7B_DANRE</name>
<evidence type="ECO:0000250" key="1"/>
<evidence type="ECO:0000255" key="2">
    <source>
        <dbReference type="PROSITE-ProRule" id="PRU00211"/>
    </source>
</evidence>
<evidence type="ECO:0000255" key="3">
    <source>
        <dbReference type="PROSITE-ProRule" id="PRU00975"/>
    </source>
</evidence>
<evidence type="ECO:0000256" key="4">
    <source>
        <dbReference type="SAM" id="MobiDB-lite"/>
    </source>
</evidence>
<proteinExistence type="inferred from homology"/>